<keyword id="KW-0002">3D-structure</keyword>
<keyword id="KW-0025">Alternative splicing</keyword>
<keyword id="KW-1003">Cell membrane</keyword>
<keyword id="KW-0225">Disease variant</keyword>
<keyword id="KW-0325">Glycoprotein</keyword>
<keyword id="KW-0326">Glycosidase</keyword>
<keyword id="KW-0372">Hormone</keyword>
<keyword id="KW-0378">Hydrolase</keyword>
<keyword id="KW-0472">Membrane</keyword>
<keyword id="KW-1267">Proteomics identification</keyword>
<keyword id="KW-1185">Reference proteome</keyword>
<keyword id="KW-0677">Repeat</keyword>
<keyword id="KW-0964">Secreted</keyword>
<keyword id="KW-0732">Signal</keyword>
<keyword id="KW-0812">Transmembrane</keyword>
<keyword id="KW-1133">Transmembrane helix</keyword>
<keyword id="KW-0848">Vitamin D</keyword>
<proteinExistence type="evidence at protein level"/>
<organism>
    <name type="scientific">Homo sapiens</name>
    <name type="common">Human</name>
    <dbReference type="NCBI Taxonomy" id="9606"/>
    <lineage>
        <taxon>Eukaryota</taxon>
        <taxon>Metazoa</taxon>
        <taxon>Chordata</taxon>
        <taxon>Craniata</taxon>
        <taxon>Vertebrata</taxon>
        <taxon>Euteleostomi</taxon>
        <taxon>Mammalia</taxon>
        <taxon>Eutheria</taxon>
        <taxon>Euarchontoglires</taxon>
        <taxon>Primates</taxon>
        <taxon>Haplorrhini</taxon>
        <taxon>Catarrhini</taxon>
        <taxon>Hominidae</taxon>
        <taxon>Homo</taxon>
    </lineage>
</organism>
<dbReference type="EC" id="3.2.1.31"/>
<dbReference type="EMBL" id="AB005142">
    <property type="protein sequence ID" value="BAA23382.1"/>
    <property type="molecule type" value="mRNA"/>
</dbReference>
<dbReference type="EMBL" id="AB009667">
    <property type="protein sequence ID" value="BAA24940.1"/>
    <property type="molecule type" value="Genomic_DNA"/>
</dbReference>
<dbReference type="EMBL" id="AB009667">
    <property type="protein sequence ID" value="BAA24941.1"/>
    <property type="molecule type" value="Genomic_DNA"/>
</dbReference>
<dbReference type="EMBL" id="AL161898">
    <property type="status" value="NOT_ANNOTATED_CDS"/>
    <property type="molecule type" value="Genomic_DNA"/>
</dbReference>
<dbReference type="EMBL" id="Z92540">
    <property type="protein sequence ID" value="CAC94767.1"/>
    <property type="molecule type" value="Genomic_DNA"/>
</dbReference>
<dbReference type="EMBL" id="Z84483">
    <property type="protein sequence ID" value="CAC94773.1"/>
    <property type="molecule type" value="Genomic_DNA"/>
</dbReference>
<dbReference type="CCDS" id="CCDS9347.1">
    <molecule id="Q9UEF7-1"/>
</dbReference>
<dbReference type="PIR" id="JC5925">
    <property type="entry name" value="JC5925"/>
</dbReference>
<dbReference type="PIR" id="JC5926">
    <property type="entry name" value="JC5926"/>
</dbReference>
<dbReference type="RefSeq" id="NP_004786.2">
    <molecule id="Q9UEF7-1"/>
    <property type="nucleotide sequence ID" value="NM_004795.3"/>
</dbReference>
<dbReference type="RefSeq" id="XP_047286732.1">
    <molecule id="Q9UEF7-2"/>
    <property type="nucleotide sequence ID" value="XM_047430776.1"/>
</dbReference>
<dbReference type="RefSeq" id="XP_054231167.1">
    <molecule id="Q9UEF7-2"/>
    <property type="nucleotide sequence ID" value="XM_054375192.1"/>
</dbReference>
<dbReference type="PDB" id="5W21">
    <property type="method" value="X-ray"/>
    <property type="resolution" value="3.00 A"/>
    <property type="chains" value="A=1-981"/>
</dbReference>
<dbReference type="PDB" id="7YSH">
    <property type="method" value="EM"/>
    <property type="resolution" value="2.74 A"/>
    <property type="chains" value="A=34-981"/>
</dbReference>
<dbReference type="PDB" id="7YSU">
    <property type="method" value="EM"/>
    <property type="resolution" value="3.20 A"/>
    <property type="chains" value="A=34-975"/>
</dbReference>
<dbReference type="PDB" id="7YSW">
    <property type="method" value="EM"/>
    <property type="resolution" value="3.03 A"/>
    <property type="chains" value="A=34-975"/>
</dbReference>
<dbReference type="PDB" id="8TOH">
    <property type="method" value="EM"/>
    <property type="resolution" value="3.29 A"/>
    <property type="chains" value="A=34-981"/>
</dbReference>
<dbReference type="PDB" id="8UF8">
    <property type="method" value="EM"/>
    <property type="resolution" value="6.50 A"/>
    <property type="chains" value="A/B=1-1012"/>
</dbReference>
<dbReference type="PDBsum" id="5W21"/>
<dbReference type="PDBsum" id="7YSH"/>
<dbReference type="PDBsum" id="7YSU"/>
<dbReference type="PDBsum" id="7YSW"/>
<dbReference type="PDBsum" id="8TOH"/>
<dbReference type="PDBsum" id="8UF8"/>
<dbReference type="EMDB" id="EMD-34075"/>
<dbReference type="EMDB" id="EMD-34082"/>
<dbReference type="EMDB" id="EMD-34084"/>
<dbReference type="EMDB" id="EMD-41452"/>
<dbReference type="EMDB" id="EMD-42186"/>
<dbReference type="SMR" id="Q9UEF7"/>
<dbReference type="BioGRID" id="114766">
    <property type="interactions" value="5"/>
</dbReference>
<dbReference type="FunCoup" id="Q9UEF7">
    <property type="interactions" value="294"/>
</dbReference>
<dbReference type="IntAct" id="Q9UEF7">
    <property type="interactions" value="2"/>
</dbReference>
<dbReference type="STRING" id="9606.ENSP00000369442"/>
<dbReference type="ChEMBL" id="CHEMBL4523485"/>
<dbReference type="CAZy" id="GH1">
    <property type="family name" value="Glycoside Hydrolase Family 1"/>
</dbReference>
<dbReference type="TCDB" id="8.A.49.1.1">
    <property type="family name" value="the klotho auxiliary protein (klotho) family"/>
</dbReference>
<dbReference type="GlyConnect" id="1435">
    <property type="glycosylation" value="1 N-Linked glycan (1 site)"/>
</dbReference>
<dbReference type="GlyCosmos" id="Q9UEF7">
    <property type="glycosylation" value="8 sites, 2 glycans"/>
</dbReference>
<dbReference type="GlyGen" id="Q9UEF7">
    <property type="glycosylation" value="9 sites, 5 N-linked glycans (1 site), 1 O-linked glycan (1 site)"/>
</dbReference>
<dbReference type="iPTMnet" id="Q9UEF7"/>
<dbReference type="PhosphoSitePlus" id="Q9UEF7"/>
<dbReference type="BioMuta" id="KL"/>
<dbReference type="DMDM" id="77416517"/>
<dbReference type="MassIVE" id="Q9UEF7"/>
<dbReference type="PaxDb" id="9606-ENSP00000369442"/>
<dbReference type="PeptideAtlas" id="Q9UEF7"/>
<dbReference type="ProteomicsDB" id="84144">
    <molecule id="Q9UEF7-1"/>
</dbReference>
<dbReference type="ProteomicsDB" id="84145">
    <molecule id="Q9UEF7-2"/>
</dbReference>
<dbReference type="ABCD" id="Q9UEF7">
    <property type="antibodies" value="1 sequenced antibody"/>
</dbReference>
<dbReference type="Antibodypedia" id="7860">
    <property type="antibodies" value="384 antibodies from 41 providers"/>
</dbReference>
<dbReference type="DNASU" id="9365"/>
<dbReference type="Ensembl" id="ENST00000380099.4">
    <molecule id="Q9UEF7-1"/>
    <property type="protein sequence ID" value="ENSP00000369442.3"/>
    <property type="gene ID" value="ENSG00000133116.8"/>
</dbReference>
<dbReference type="GeneID" id="9365"/>
<dbReference type="KEGG" id="hsa:9365"/>
<dbReference type="MANE-Select" id="ENST00000380099.4">
    <property type="protein sequence ID" value="ENSP00000369442.3"/>
    <property type="RefSeq nucleotide sequence ID" value="NM_004795.4"/>
    <property type="RefSeq protein sequence ID" value="NP_004786.2"/>
</dbReference>
<dbReference type="UCSC" id="uc001uus.3">
    <molecule id="Q9UEF7-1"/>
    <property type="organism name" value="human"/>
</dbReference>
<dbReference type="AGR" id="HGNC:6344"/>
<dbReference type="CTD" id="9365"/>
<dbReference type="DisGeNET" id="9365"/>
<dbReference type="GeneCards" id="KL"/>
<dbReference type="GeneReviews" id="KL"/>
<dbReference type="HGNC" id="HGNC:6344">
    <property type="gene designation" value="KL"/>
</dbReference>
<dbReference type="HPA" id="ENSG00000133116">
    <property type="expression patterns" value="Group enriched (kidney, parathyroid gland)"/>
</dbReference>
<dbReference type="MalaCards" id="KL"/>
<dbReference type="MIM" id="604824">
    <property type="type" value="gene"/>
</dbReference>
<dbReference type="MIM" id="617994">
    <property type="type" value="phenotype"/>
</dbReference>
<dbReference type="neXtProt" id="NX_Q9UEF7"/>
<dbReference type="OpenTargets" id="ENSG00000133116"/>
<dbReference type="Orphanet" id="306661">
    <property type="disease" value="Familial hyperphosphatemic tumoral calcinosis/Hyperphosphatemic hyperostosis syndrome"/>
</dbReference>
<dbReference type="PharmGKB" id="PA30130"/>
<dbReference type="VEuPathDB" id="HostDB:ENSG00000133116"/>
<dbReference type="eggNOG" id="KOG0626">
    <property type="taxonomic scope" value="Eukaryota"/>
</dbReference>
<dbReference type="GeneTree" id="ENSGT00940000157614"/>
<dbReference type="HOGENOM" id="CLU_001859_5_2_1"/>
<dbReference type="InParanoid" id="Q9UEF7"/>
<dbReference type="OMA" id="RKPHCVD"/>
<dbReference type="OrthoDB" id="65569at2759"/>
<dbReference type="PAN-GO" id="Q9UEF7">
    <property type="GO annotations" value="3 GO annotations based on evolutionary models"/>
</dbReference>
<dbReference type="PhylomeDB" id="Q9UEF7"/>
<dbReference type="TreeFam" id="TF314803"/>
<dbReference type="PathwayCommons" id="Q9UEF7"/>
<dbReference type="Reactome" id="R-HSA-109704">
    <property type="pathway name" value="PI3K Cascade"/>
</dbReference>
<dbReference type="Reactome" id="R-HSA-1257604">
    <property type="pathway name" value="PIP3 activates AKT signaling"/>
</dbReference>
<dbReference type="Reactome" id="R-HSA-190374">
    <property type="pathway name" value="FGFR1c and Klotho ligand binding and activation"/>
</dbReference>
<dbReference type="Reactome" id="R-HSA-2219530">
    <property type="pathway name" value="Constitutive Signaling by Aberrant PI3K in Cancer"/>
</dbReference>
<dbReference type="Reactome" id="R-HSA-5654219">
    <property type="pathway name" value="Phospholipase C-mediated cascade: FGFR1"/>
</dbReference>
<dbReference type="Reactome" id="R-HSA-5654687">
    <property type="pathway name" value="Downstream signaling of activated FGFR1"/>
</dbReference>
<dbReference type="Reactome" id="R-HSA-5654688">
    <property type="pathway name" value="SHC-mediated cascade:FGFR1"/>
</dbReference>
<dbReference type="Reactome" id="R-HSA-5654689">
    <property type="pathway name" value="PI-3K cascade:FGFR1"/>
</dbReference>
<dbReference type="Reactome" id="R-HSA-5654693">
    <property type="pathway name" value="FRS-mediated FGFR1 signaling"/>
</dbReference>
<dbReference type="Reactome" id="R-HSA-5654726">
    <property type="pathway name" value="Negative regulation of FGFR1 signaling"/>
</dbReference>
<dbReference type="Reactome" id="R-HSA-5673001">
    <property type="pathway name" value="RAF/MAP kinase cascade"/>
</dbReference>
<dbReference type="Reactome" id="R-HSA-6811558">
    <property type="pathway name" value="PI5P, PP2A and IER3 Regulate PI3K/AKT Signaling"/>
</dbReference>
<dbReference type="SignaLink" id="Q9UEF7"/>
<dbReference type="BioGRID-ORCS" id="9365">
    <property type="hits" value="12 hits in 1150 CRISPR screens"/>
</dbReference>
<dbReference type="ChiTaRS" id="KL">
    <property type="organism name" value="human"/>
</dbReference>
<dbReference type="GeneWiki" id="Klotho_(biology)"/>
<dbReference type="GenomeRNAi" id="9365"/>
<dbReference type="Pharos" id="Q9UEF7">
    <property type="development level" value="Tbio"/>
</dbReference>
<dbReference type="PRO" id="PR:Q9UEF7"/>
<dbReference type="Proteomes" id="UP000005640">
    <property type="component" value="Chromosome 13"/>
</dbReference>
<dbReference type="RNAct" id="Q9UEF7">
    <property type="molecule type" value="protein"/>
</dbReference>
<dbReference type="Bgee" id="ENSG00000133116">
    <property type="expression patterns" value="Expressed in choroid plexus epithelium and 123 other cell types or tissues"/>
</dbReference>
<dbReference type="GO" id="GO:0016324">
    <property type="term" value="C:apical plasma membrane"/>
    <property type="evidence" value="ECO:0007669"/>
    <property type="project" value="UniProtKB-SubCell"/>
</dbReference>
<dbReference type="GO" id="GO:0070062">
    <property type="term" value="C:extracellular exosome"/>
    <property type="evidence" value="ECO:0007005"/>
    <property type="project" value="UniProtKB"/>
</dbReference>
<dbReference type="GO" id="GO:0005576">
    <property type="term" value="C:extracellular region"/>
    <property type="evidence" value="ECO:0000304"/>
    <property type="project" value="Reactome"/>
</dbReference>
<dbReference type="GO" id="GO:0005615">
    <property type="term" value="C:extracellular space"/>
    <property type="evidence" value="ECO:0000304"/>
    <property type="project" value="UniProtKB"/>
</dbReference>
<dbReference type="GO" id="GO:0016020">
    <property type="term" value="C:membrane"/>
    <property type="evidence" value="ECO:0000304"/>
    <property type="project" value="UniProtKB"/>
</dbReference>
<dbReference type="GO" id="GO:0005886">
    <property type="term" value="C:plasma membrane"/>
    <property type="evidence" value="ECO:0000304"/>
    <property type="project" value="Reactome"/>
</dbReference>
<dbReference type="GO" id="GO:0008422">
    <property type="term" value="F:beta-glucosidase activity"/>
    <property type="evidence" value="ECO:0000304"/>
    <property type="project" value="ProtInc"/>
</dbReference>
<dbReference type="GO" id="GO:0004566">
    <property type="term" value="F:beta-glucuronidase activity"/>
    <property type="evidence" value="ECO:0007669"/>
    <property type="project" value="UniProtKB-EC"/>
</dbReference>
<dbReference type="GO" id="GO:0017134">
    <property type="term" value="F:fibroblast growth factor binding"/>
    <property type="evidence" value="ECO:0000353"/>
    <property type="project" value="UniProtKB"/>
</dbReference>
<dbReference type="GO" id="GO:0005104">
    <property type="term" value="F:fibroblast growth factor receptor binding"/>
    <property type="evidence" value="ECO:0000318"/>
    <property type="project" value="GO_Central"/>
</dbReference>
<dbReference type="GO" id="GO:0005179">
    <property type="term" value="F:hormone activity"/>
    <property type="evidence" value="ECO:0007669"/>
    <property type="project" value="UniProtKB-KW"/>
</dbReference>
<dbReference type="GO" id="GO:0005499">
    <property type="term" value="F:vitamin D binding"/>
    <property type="evidence" value="ECO:0007669"/>
    <property type="project" value="UniProtKB-KW"/>
</dbReference>
<dbReference type="GO" id="GO:0055074">
    <property type="term" value="P:calcium ion homeostasis"/>
    <property type="evidence" value="ECO:0007669"/>
    <property type="project" value="Ensembl"/>
</dbReference>
<dbReference type="GO" id="GO:0005975">
    <property type="term" value="P:carbohydrate metabolic process"/>
    <property type="evidence" value="ECO:0007669"/>
    <property type="project" value="InterPro"/>
</dbReference>
<dbReference type="GO" id="GO:0008340">
    <property type="term" value="P:determination of adult lifespan"/>
    <property type="evidence" value="ECO:0007669"/>
    <property type="project" value="Ensembl"/>
</dbReference>
<dbReference type="GO" id="GO:0006112">
    <property type="term" value="P:energy reserve metabolic process"/>
    <property type="evidence" value="ECO:0007669"/>
    <property type="project" value="Ensembl"/>
</dbReference>
<dbReference type="GO" id="GO:0008543">
    <property type="term" value="P:fibroblast growth factor receptor signaling pathway"/>
    <property type="evidence" value="ECO:0000318"/>
    <property type="project" value="GO_Central"/>
</dbReference>
<dbReference type="GO" id="GO:0003085">
    <property type="term" value="P:negative regulation of systemic arterial blood pressure"/>
    <property type="evidence" value="ECO:0007669"/>
    <property type="project" value="Ensembl"/>
</dbReference>
<dbReference type="GO" id="GO:0042421">
    <property type="term" value="P:norepinephrine biosynthetic process"/>
    <property type="evidence" value="ECO:0007669"/>
    <property type="project" value="Ensembl"/>
</dbReference>
<dbReference type="GO" id="GO:0030501">
    <property type="term" value="P:positive regulation of bone mineralization"/>
    <property type="evidence" value="ECO:0000315"/>
    <property type="project" value="UniProtKB"/>
</dbReference>
<dbReference type="GO" id="GO:0090080">
    <property type="term" value="P:positive regulation of MAPKKK cascade by fibroblast growth factor receptor signaling pathway"/>
    <property type="evidence" value="ECO:0007669"/>
    <property type="project" value="Ensembl"/>
</dbReference>
<dbReference type="GO" id="GO:0014823">
    <property type="term" value="P:response to activity"/>
    <property type="evidence" value="ECO:0007669"/>
    <property type="project" value="Ensembl"/>
</dbReference>
<dbReference type="GO" id="GO:1990776">
    <property type="term" value="P:response to angiotensin"/>
    <property type="evidence" value="ECO:0007669"/>
    <property type="project" value="Ensembl"/>
</dbReference>
<dbReference type="GO" id="GO:0033280">
    <property type="term" value="P:response to vitamin D"/>
    <property type="evidence" value="ECO:0007669"/>
    <property type="project" value="Ensembl"/>
</dbReference>
<dbReference type="FunFam" id="3.20.20.80:FF:000042">
    <property type="entry name" value="Klotho"/>
    <property type="match status" value="1"/>
</dbReference>
<dbReference type="FunFam" id="3.20.20.80:FF:000062">
    <property type="entry name" value="Klotho"/>
    <property type="match status" value="1"/>
</dbReference>
<dbReference type="Gene3D" id="3.20.20.80">
    <property type="entry name" value="Glycosidases"/>
    <property type="match status" value="2"/>
</dbReference>
<dbReference type="InterPro" id="IPR001360">
    <property type="entry name" value="Glyco_hydro_1"/>
</dbReference>
<dbReference type="InterPro" id="IPR033132">
    <property type="entry name" value="Glyco_hydro_1_N_CS"/>
</dbReference>
<dbReference type="InterPro" id="IPR017853">
    <property type="entry name" value="Glycoside_hydrolase_SF"/>
</dbReference>
<dbReference type="PANTHER" id="PTHR10353">
    <property type="entry name" value="GLYCOSYL HYDROLASE"/>
    <property type="match status" value="1"/>
</dbReference>
<dbReference type="PANTHER" id="PTHR10353:SF10">
    <property type="entry name" value="KLOTHO"/>
    <property type="match status" value="1"/>
</dbReference>
<dbReference type="Pfam" id="PF00232">
    <property type="entry name" value="Glyco_hydro_1"/>
    <property type="match status" value="4"/>
</dbReference>
<dbReference type="PRINTS" id="PR00131">
    <property type="entry name" value="GLHYDRLASE1"/>
</dbReference>
<dbReference type="SUPFAM" id="SSF51445">
    <property type="entry name" value="(Trans)glycosidases"/>
    <property type="match status" value="2"/>
</dbReference>
<dbReference type="PROSITE" id="PS00653">
    <property type="entry name" value="GLYCOSYL_HYDROL_F1_2"/>
    <property type="match status" value="1"/>
</dbReference>
<sequence length="1012" mass="116181">MPASAPPRRPRPPPPSLSLLLVLLGLGGRRLRAEPGDGAQTWARFSRPPAPEAAGLFQGTFPDGFLWAVGSAAYQTEGGWQQHGKGASIWDTFTHHPLAPPGDSRNASLPLGAPSPLQPATGDVASDSYNNVFRDTEALRELGVTHYRFSISWARVLPNGSAGVPNREGLRYYRRLLERLRELGVQPVVTLYHWDLPQRLQDAYGGWANRALADHFRDYAELCFRHFGGQVKYWITIDNPYVVAWHGYATGRLAPGIRGSPRLGYLVAHNLLLAHAKVWHLYNTSFRPTQGGQVSIALSSHWINPRRMTDHSIKECQKSLDFVLGWFAKPVFIDGDYPESMKNNLSSILPDFTESEKKFIKGTADFFALCFGPTLSFQLLDPHMKFRQLESPNLRQLLSWIDLEFNHPQIFIVENGWFVSGTTKRDDAKYMYYLKKFIMETLKAIKLDGVDVIGYTAWSLMDGFEWHRGYSIRRGLFYVDFLSQDKMLLPKSSALFYQKLIEKNGFPPLPENQPLEGTFPCDFAWGVVDNYIQVDTTLSQFTDLNVYLWDVHHSKRLIKVDGVVTKKRKSYCVDFAAIQPQIALLQEMHVTHFRFSLDWALILPLGNQSQVNHTILQYYRCMASELVRVNITPVVALWQPMAPNQGLPRLLARQGAWENPYTALAFAEYARLCFQELGHHVKLWITMNEPYTRNMTYSAGHNLLKAHALAWHVYNEKFRHAQNGKISIALQADWIEPACPFSQKDKEVAERVLEFDIGWLAEPIFGSGDYPWVMRDWLNQRNNFLLPYFTEDEKKLIQGTFDFLALSHYTTILVDSEKEDPIKYNDYLEVQEMTDITWLNSPSQVAVVPWGLRKVLNWLKFKYGDLPMYIISNGIDDGLHAEDDQLRVYYMQNYINEALKAHILDGINLCGYFAYSFNDRTAPRFGLYRYAADQFEPKASMKHYRKIIDSNGFPGPETLERFCPEEFTVCTECSFFHTRKSLLAFIAFLFFASIISLSLIFYYSKKGRRSYK</sequence>
<accession>Q9UEF7</accession>
<accession>Q5VZ95</accession>
<accession>Q96KV5</accession>
<accession>Q96KW5</accession>
<accession>Q9UEI9</accession>
<accession>Q9Y4F0</accession>
<evidence type="ECO:0000250" key="1"/>
<evidence type="ECO:0000250" key="2">
    <source>
        <dbReference type="UniProtKB" id="O35082"/>
    </source>
</evidence>
<evidence type="ECO:0000255" key="3"/>
<evidence type="ECO:0000269" key="4">
    <source>
    </source>
</evidence>
<evidence type="ECO:0000269" key="5">
    <source>
    </source>
</evidence>
<evidence type="ECO:0000269" key="6">
    <source>
    </source>
</evidence>
<evidence type="ECO:0000269" key="7">
    <source>
    </source>
</evidence>
<evidence type="ECO:0000269" key="8">
    <source>
    </source>
</evidence>
<evidence type="ECO:0000269" key="9">
    <source>
    </source>
</evidence>
<evidence type="ECO:0000269" key="10">
    <source>
    </source>
</evidence>
<evidence type="ECO:0000269" key="11">
    <source>
    </source>
</evidence>
<evidence type="ECO:0000269" key="12">
    <source>
    </source>
</evidence>
<evidence type="ECO:0000269" key="13">
    <source>
    </source>
</evidence>
<evidence type="ECO:0000303" key="14">
    <source>
    </source>
</evidence>
<evidence type="ECO:0000305" key="15"/>
<evidence type="ECO:0007829" key="16">
    <source>
        <dbReference type="PDB" id="5W21"/>
    </source>
</evidence>
<evidence type="ECO:0007829" key="17">
    <source>
        <dbReference type="PDB" id="7YSH"/>
    </source>
</evidence>
<evidence type="ECO:0007829" key="18">
    <source>
        <dbReference type="PDB" id="7YSU"/>
    </source>
</evidence>
<evidence type="ECO:0007829" key="19">
    <source>
        <dbReference type="PDB" id="7YSW"/>
    </source>
</evidence>
<name>KLOT_HUMAN</name>
<protein>
    <recommendedName>
        <fullName>Klotho</fullName>
        <ecNumber>3.2.1.31</ecNumber>
    </recommendedName>
    <component>
        <recommendedName>
            <fullName>Klotho peptide</fullName>
        </recommendedName>
    </component>
</protein>
<feature type="signal peptide" evidence="3">
    <location>
        <begin position="1"/>
        <end position="33"/>
    </location>
</feature>
<feature type="chain" id="PRO_0000042243" description="Klotho">
    <location>
        <begin position="34"/>
        <end position="1012"/>
    </location>
</feature>
<feature type="chain" id="PRO_0000042244" description="Klotho peptide" evidence="1">
    <location>
        <begin position="34"/>
        <end status="unknown"/>
    </location>
</feature>
<feature type="topological domain" description="Extracellular" evidence="3">
    <location>
        <begin position="34"/>
        <end position="981"/>
    </location>
</feature>
<feature type="transmembrane region" description="Helical" evidence="3">
    <location>
        <begin position="982"/>
        <end position="1002"/>
    </location>
</feature>
<feature type="topological domain" description="Cytoplasmic" evidence="3">
    <location>
        <begin position="1003"/>
        <end position="1012"/>
    </location>
</feature>
<feature type="region of interest" description="Glycosyl hydrolase-1 1">
    <location>
        <begin position="57"/>
        <end position="506"/>
    </location>
</feature>
<feature type="region of interest" description="Glycosyl hydrolase-1 2">
    <location>
        <begin position="515"/>
        <end position="953"/>
    </location>
</feature>
<feature type="glycosylation site" description="N-linked (GlcNAc...) asparagine" evidence="3">
    <location>
        <position position="106"/>
    </location>
</feature>
<feature type="glycosylation site" description="N-linked (GlcNAc...) asparagine" evidence="3">
    <location>
        <position position="159"/>
    </location>
</feature>
<feature type="glycosylation site" description="N-linked (GlcNAc...) asparagine" evidence="3">
    <location>
        <position position="283"/>
    </location>
</feature>
<feature type="glycosylation site" description="N-linked (GlcNAc...) asparagine" evidence="3">
    <location>
        <position position="344"/>
    </location>
</feature>
<feature type="glycosylation site" description="N-linked (GlcNAc...) asparagine" evidence="3">
    <location>
        <position position="607"/>
    </location>
</feature>
<feature type="glycosylation site" description="N-linked (GlcNAc...) asparagine" evidence="3">
    <location>
        <position position="612"/>
    </location>
</feature>
<feature type="glycosylation site" description="N-linked (GlcNAc...) asparagine" evidence="3">
    <location>
        <position position="694"/>
    </location>
</feature>
<feature type="splice variant" id="VSP_015824" description="In isoform 2." evidence="14">
    <original>DTTLSQFTDLNVYLW</original>
    <variation>SQLTKPISSLTKPYH</variation>
    <location>
        <begin position="535"/>
        <end position="549"/>
    </location>
</feature>
<feature type="splice variant" id="VSP_015825" description="In isoform 2." evidence="14">
    <location>
        <begin position="550"/>
        <end position="1012"/>
    </location>
</feature>
<feature type="sequence variant" id="VAR_023582" description="In dbSNP:rs1052018." evidence="13">
    <original>P</original>
    <variation>Q</variation>
    <location>
        <position position="15"/>
    </location>
</feature>
<feature type="sequence variant" id="VAR_023583" description="In dbSNP:rs1052019." evidence="12">
    <original>F</original>
    <variation>V</variation>
    <location>
        <position position="45"/>
    </location>
</feature>
<feature type="sequence variant" id="VAR_064554" description="In HFTC3; impairs the ability to form a ternary complex with FGF23 and FGFR1c; impairs KL-dependent FGF23 signaling; dbSNP:rs121908423." evidence="11">
    <original>H</original>
    <variation>R</variation>
    <location>
        <position position="193"/>
    </location>
</feature>
<feature type="sequence variant" id="VAR_023584" description="In allele KL-VS; dbSNP:rs9536314." evidence="7 9">
    <original>F</original>
    <variation>V</variation>
    <location>
        <position position="352"/>
    </location>
</feature>
<feature type="sequence variant" id="VAR_023585" description="In allele KL-VS; dbSNP:rs9527025." evidence="7 9">
    <original>C</original>
    <variation>S</variation>
    <location>
        <position position="370"/>
    </location>
</feature>
<feature type="sequence variant" id="VAR_049295" description="In dbSNP:rs3752472.">
    <original>P</original>
    <variation>S</variation>
    <location>
        <position position="514"/>
    </location>
</feature>
<feature type="sequence variant" id="VAR_036449" description="In a colorectal cancer sample; somatic mutation; dbSNP:rs139939367." evidence="10">
    <original>P</original>
    <variation>L</variation>
    <location>
        <position position="954"/>
    </location>
</feature>
<feature type="helix" evidence="17">
    <location>
        <begin position="37"/>
        <end position="40"/>
    </location>
</feature>
<feature type="helix" evidence="17">
    <location>
        <begin position="41"/>
        <end position="44"/>
    </location>
</feature>
<feature type="strand" evidence="17">
    <location>
        <begin position="45"/>
        <end position="47"/>
    </location>
</feature>
<feature type="helix" evidence="17">
    <location>
        <begin position="51"/>
        <end position="54"/>
    </location>
</feature>
<feature type="strand" evidence="17">
    <location>
        <begin position="66"/>
        <end position="70"/>
    </location>
</feature>
<feature type="turn" evidence="17">
    <location>
        <begin position="74"/>
        <end position="77"/>
    </location>
</feature>
<feature type="helix" evidence="17">
    <location>
        <begin position="82"/>
        <end position="84"/>
    </location>
</feature>
<feature type="helix" evidence="17">
    <location>
        <begin position="90"/>
        <end position="93"/>
    </location>
</feature>
<feature type="strand" evidence="17">
    <location>
        <begin position="122"/>
        <end position="126"/>
    </location>
</feature>
<feature type="turn" evidence="17">
    <location>
        <begin position="128"/>
        <end position="130"/>
    </location>
</feature>
<feature type="helix" evidence="17">
    <location>
        <begin position="132"/>
        <end position="142"/>
    </location>
</feature>
<feature type="strand" evidence="17">
    <location>
        <begin position="145"/>
        <end position="150"/>
    </location>
</feature>
<feature type="helix" evidence="17">
    <location>
        <begin position="153"/>
        <end position="156"/>
    </location>
</feature>
<feature type="strand" evidence="19">
    <location>
        <begin position="157"/>
        <end position="159"/>
    </location>
</feature>
<feature type="strand" evidence="17">
    <location>
        <begin position="161"/>
        <end position="163"/>
    </location>
</feature>
<feature type="helix" evidence="17">
    <location>
        <begin position="167"/>
        <end position="183"/>
    </location>
</feature>
<feature type="strand" evidence="17">
    <location>
        <begin position="186"/>
        <end position="194"/>
    </location>
</feature>
<feature type="helix" evidence="17">
    <location>
        <begin position="198"/>
        <end position="204"/>
    </location>
</feature>
<feature type="helix" evidence="17">
    <location>
        <begin position="206"/>
        <end position="208"/>
    </location>
</feature>
<feature type="strand" evidence="18">
    <location>
        <begin position="209"/>
        <end position="211"/>
    </location>
</feature>
<feature type="helix" evidence="17">
    <location>
        <begin position="212"/>
        <end position="227"/>
    </location>
</feature>
<feature type="turn" evidence="17">
    <location>
        <begin position="228"/>
        <end position="230"/>
    </location>
</feature>
<feature type="strand" evidence="17">
    <location>
        <begin position="233"/>
        <end position="238"/>
    </location>
</feature>
<feature type="helix" evidence="17">
    <location>
        <begin position="240"/>
        <end position="247"/>
    </location>
</feature>
<feature type="strand" evidence="17">
    <location>
        <begin position="248"/>
        <end position="253"/>
    </location>
</feature>
<feature type="helix" evidence="17">
    <location>
        <begin position="261"/>
        <end position="285"/>
    </location>
</feature>
<feature type="helix" evidence="17">
    <location>
        <begin position="287"/>
        <end position="290"/>
    </location>
</feature>
<feature type="strand" evidence="17">
    <location>
        <begin position="293"/>
        <end position="299"/>
    </location>
</feature>
<feature type="strand" evidence="17">
    <location>
        <begin position="302"/>
        <end position="304"/>
    </location>
</feature>
<feature type="strand" evidence="17">
    <location>
        <begin position="306"/>
        <end position="308"/>
    </location>
</feature>
<feature type="helix" evidence="17">
    <location>
        <begin position="310"/>
        <end position="323"/>
    </location>
</feature>
<feature type="helix" evidence="17">
    <location>
        <begin position="325"/>
        <end position="332"/>
    </location>
</feature>
<feature type="strand" evidence="16">
    <location>
        <begin position="333"/>
        <end position="336"/>
    </location>
</feature>
<feature type="helix" evidence="17">
    <location>
        <begin position="339"/>
        <end position="342"/>
    </location>
</feature>
<feature type="turn" evidence="17">
    <location>
        <begin position="346"/>
        <end position="348"/>
    </location>
</feature>
<feature type="helix" evidence="17">
    <location>
        <begin position="355"/>
        <end position="359"/>
    </location>
</feature>
<feature type="strand" evidence="17">
    <location>
        <begin position="360"/>
        <end position="362"/>
    </location>
</feature>
<feature type="strand" evidence="17">
    <location>
        <begin position="365"/>
        <end position="372"/>
    </location>
</feature>
<feature type="helix" evidence="17">
    <location>
        <begin position="375"/>
        <end position="379"/>
    </location>
</feature>
<feature type="helix" evidence="17">
    <location>
        <begin position="382"/>
        <end position="385"/>
    </location>
</feature>
<feature type="strand" evidence="17">
    <location>
        <begin position="389"/>
        <end position="391"/>
    </location>
</feature>
<feature type="helix" evidence="17">
    <location>
        <begin position="394"/>
        <end position="404"/>
    </location>
</feature>
<feature type="strand" evidence="17">
    <location>
        <begin position="409"/>
        <end position="415"/>
    </location>
</feature>
<feature type="strand" evidence="19">
    <location>
        <begin position="419"/>
        <end position="422"/>
    </location>
</feature>
<feature type="helix" evidence="17">
    <location>
        <begin position="428"/>
        <end position="446"/>
    </location>
</feature>
<feature type="strand" evidence="17">
    <location>
        <begin position="451"/>
        <end position="458"/>
    </location>
</feature>
<feature type="helix" evidence="16">
    <location>
        <begin position="466"/>
        <end position="468"/>
    </location>
</feature>
<feature type="strand" evidence="17">
    <location>
        <begin position="471"/>
        <end position="473"/>
    </location>
</feature>
<feature type="strand" evidence="17">
    <location>
        <begin position="476"/>
        <end position="478"/>
    </location>
</feature>
<feature type="strand" evidence="16">
    <location>
        <begin position="483"/>
        <end position="485"/>
    </location>
</feature>
<feature type="helix" evidence="17">
    <location>
        <begin position="492"/>
        <end position="503"/>
    </location>
</feature>
<feature type="turn" evidence="17">
    <location>
        <begin position="510"/>
        <end position="512"/>
    </location>
</feature>
<feature type="strand" evidence="17">
    <location>
        <begin position="524"/>
        <end position="531"/>
    </location>
</feature>
<feature type="strand" evidence="16">
    <location>
        <begin position="539"/>
        <end position="541"/>
    </location>
</feature>
<feature type="strand" evidence="17">
    <location>
        <begin position="545"/>
        <end position="549"/>
    </location>
</feature>
<feature type="strand" evidence="16">
    <location>
        <begin position="552"/>
        <end position="554"/>
    </location>
</feature>
<feature type="strand" evidence="17">
    <location>
        <begin position="557"/>
        <end position="564"/>
    </location>
</feature>
<feature type="strand" evidence="17">
    <location>
        <begin position="572"/>
        <end position="575"/>
    </location>
</feature>
<feature type="turn" evidence="17">
    <location>
        <begin position="576"/>
        <end position="578"/>
    </location>
</feature>
<feature type="helix" evidence="17">
    <location>
        <begin position="579"/>
        <end position="587"/>
    </location>
</feature>
<feature type="strand" evidence="17">
    <location>
        <begin position="591"/>
        <end position="596"/>
    </location>
</feature>
<feature type="helix" evidence="17">
    <location>
        <begin position="599"/>
        <end position="602"/>
    </location>
</feature>
<feature type="strand" evidence="18">
    <location>
        <begin position="603"/>
        <end position="607"/>
    </location>
</feature>
<feature type="helix" evidence="17">
    <location>
        <begin position="608"/>
        <end position="610"/>
    </location>
</feature>
<feature type="helix" evidence="17">
    <location>
        <begin position="613"/>
        <end position="628"/>
    </location>
</feature>
<feature type="strand" evidence="17">
    <location>
        <begin position="632"/>
        <end position="638"/>
    </location>
</feature>
<feature type="turn" evidence="17">
    <location>
        <begin position="643"/>
        <end position="646"/>
    </location>
</feature>
<feature type="helix" evidence="17">
    <location>
        <begin position="649"/>
        <end position="652"/>
    </location>
</feature>
<feature type="turn" evidence="17">
    <location>
        <begin position="653"/>
        <end position="657"/>
    </location>
</feature>
<feature type="helix" evidence="17">
    <location>
        <begin position="660"/>
        <end position="676"/>
    </location>
</feature>
<feature type="helix" evidence="17">
    <location>
        <begin position="677"/>
        <end position="679"/>
    </location>
</feature>
<feature type="strand" evidence="17">
    <location>
        <begin position="683"/>
        <end position="688"/>
    </location>
</feature>
<feature type="turn" evidence="16">
    <location>
        <begin position="692"/>
        <end position="694"/>
    </location>
</feature>
<feature type="helix" evidence="17">
    <location>
        <begin position="697"/>
        <end position="717"/>
    </location>
</feature>
<feature type="helix" evidence="17">
    <location>
        <begin position="719"/>
        <end position="722"/>
    </location>
</feature>
<feature type="strand" evidence="17">
    <location>
        <begin position="725"/>
        <end position="731"/>
    </location>
</feature>
<feature type="strand" evidence="17">
    <location>
        <begin position="734"/>
        <end position="739"/>
    </location>
</feature>
<feature type="helix" evidence="17">
    <location>
        <begin position="743"/>
        <end position="756"/>
    </location>
</feature>
<feature type="helix" evidence="17">
    <location>
        <begin position="758"/>
        <end position="765"/>
    </location>
</feature>
<feature type="strand" evidence="17">
    <location>
        <begin position="766"/>
        <end position="769"/>
    </location>
</feature>
<feature type="helix" evidence="17">
    <location>
        <begin position="772"/>
        <end position="779"/>
    </location>
</feature>
<feature type="turn" evidence="17">
    <location>
        <begin position="780"/>
        <end position="782"/>
    </location>
</feature>
<feature type="helix" evidence="17">
    <location>
        <begin position="791"/>
        <end position="797"/>
    </location>
</feature>
<feature type="strand" evidence="17">
    <location>
        <begin position="802"/>
        <end position="807"/>
    </location>
</feature>
<feature type="strand" evidence="17">
    <location>
        <begin position="811"/>
        <end position="817"/>
    </location>
</feature>
<feature type="turn" evidence="17">
    <location>
        <begin position="821"/>
        <end position="823"/>
    </location>
</feature>
<feature type="turn" evidence="17">
    <location>
        <begin position="826"/>
        <end position="829"/>
    </location>
</feature>
<feature type="strand" evidence="17">
    <location>
        <begin position="830"/>
        <end position="833"/>
    </location>
</feature>
<feature type="strand" evidence="17">
    <location>
        <begin position="838"/>
        <end position="840"/>
    </location>
</feature>
<feature type="helix" evidence="17">
    <location>
        <begin position="850"/>
        <end position="863"/>
    </location>
</feature>
<feature type="strand" evidence="17">
    <location>
        <begin position="867"/>
        <end position="873"/>
    </location>
</feature>
<feature type="strand" evidence="17">
    <location>
        <begin position="879"/>
        <end position="881"/>
    </location>
</feature>
<feature type="helix" evidence="17">
    <location>
        <begin position="882"/>
        <end position="903"/>
    </location>
</feature>
<feature type="strand" evidence="17">
    <location>
        <begin position="908"/>
        <end position="915"/>
    </location>
</feature>
<feature type="turn" evidence="17">
    <location>
        <begin position="919"/>
        <end position="921"/>
    </location>
</feature>
<feature type="turn" evidence="17">
    <location>
        <begin position="923"/>
        <end position="925"/>
    </location>
</feature>
<feature type="strand" evidence="17">
    <location>
        <begin position="927"/>
        <end position="931"/>
    </location>
</feature>
<feature type="strand" evidence="17">
    <location>
        <begin position="934"/>
        <end position="937"/>
    </location>
</feature>
<feature type="helix" evidence="17">
    <location>
        <begin position="939"/>
        <end position="950"/>
    </location>
</feature>
<feature type="strand" evidence="18">
    <location>
        <begin position="971"/>
        <end position="973"/>
    </location>
</feature>
<reference key="1">
    <citation type="journal article" date="1997" name="Nature">
        <title>Mutation of the mouse klotho gene leads to a syndrome resembling ageing.</title>
        <authorList>
            <person name="Kuro-o M."/>
            <person name="Matsumura Y."/>
            <person name="Aizawa H."/>
            <person name="Kawaguchi H."/>
            <person name="Suga T."/>
            <person name="Utsugi T."/>
            <person name="Ohyama Y."/>
            <person name="Kurabayashi M."/>
            <person name="Kaname T."/>
            <person name="Kume E."/>
            <person name="Iwasaki H."/>
            <person name="Iida A."/>
            <person name="Shiraki-Iida T."/>
            <person name="Nishikawa S."/>
            <person name="Nagai R."/>
            <person name="Nabeshima Y."/>
        </authorList>
    </citation>
    <scope>NUCLEOTIDE SEQUENCE [MRNA] (ISOFORM 1)</scope>
    <scope>VARIANT VAL-45</scope>
    <source>
        <tissue>Kidney</tissue>
    </source>
</reference>
<reference key="2">
    <citation type="journal article" date="1998" name="Biochem. Biophys. Res. Commun.">
        <title>Identification of the human klotho gene and its two transcripts encoding membrane and secreted klotho protein.</title>
        <authorList>
            <person name="Matsumura Y."/>
            <person name="Aizawa H."/>
            <person name="Shiraki-Iida T."/>
            <person name="Nagai R."/>
            <person name="Kuro-o M."/>
            <person name="Nabeshima Y."/>
        </authorList>
    </citation>
    <scope>NUCLEOTIDE SEQUENCE [GENOMIC DNA / MRNA] (ISOFORMS 1 AND 2)</scope>
    <scope>VARIANT GLN-15</scope>
    <scope>TISSUE SPECIFICITY</scope>
    <source>
        <tissue>Hippocampus</tissue>
        <tissue>Kidney</tissue>
    </source>
</reference>
<reference key="3">
    <citation type="journal article" date="2004" name="Nature">
        <title>The DNA sequence and analysis of human chromosome 13.</title>
        <authorList>
            <person name="Dunham A."/>
            <person name="Matthews L.H."/>
            <person name="Burton J."/>
            <person name="Ashurst J.L."/>
            <person name="Howe K.L."/>
            <person name="Ashcroft K.J."/>
            <person name="Beare D.M."/>
            <person name="Burford D.C."/>
            <person name="Hunt S.E."/>
            <person name="Griffiths-Jones S."/>
            <person name="Jones M.C."/>
            <person name="Keenan S.J."/>
            <person name="Oliver K."/>
            <person name="Scott C.E."/>
            <person name="Ainscough R."/>
            <person name="Almeida J.P."/>
            <person name="Ambrose K.D."/>
            <person name="Andrews D.T."/>
            <person name="Ashwell R.I.S."/>
            <person name="Babbage A.K."/>
            <person name="Bagguley C.L."/>
            <person name="Bailey J."/>
            <person name="Bannerjee R."/>
            <person name="Barlow K.F."/>
            <person name="Bates K."/>
            <person name="Beasley H."/>
            <person name="Bird C.P."/>
            <person name="Bray-Allen S."/>
            <person name="Brown A.J."/>
            <person name="Brown J.Y."/>
            <person name="Burrill W."/>
            <person name="Carder C."/>
            <person name="Carter N.P."/>
            <person name="Chapman J.C."/>
            <person name="Clamp M.E."/>
            <person name="Clark S.Y."/>
            <person name="Clarke G."/>
            <person name="Clee C.M."/>
            <person name="Clegg S.C."/>
            <person name="Cobley V."/>
            <person name="Collins J.E."/>
            <person name="Corby N."/>
            <person name="Coville G.J."/>
            <person name="Deloukas P."/>
            <person name="Dhami P."/>
            <person name="Dunham I."/>
            <person name="Dunn M."/>
            <person name="Earthrowl M.E."/>
            <person name="Ellington A.G."/>
            <person name="Faulkner L."/>
            <person name="Frankish A.G."/>
            <person name="Frankland J."/>
            <person name="French L."/>
            <person name="Garner P."/>
            <person name="Garnett J."/>
            <person name="Gilbert J.G.R."/>
            <person name="Gilson C.J."/>
            <person name="Ghori J."/>
            <person name="Grafham D.V."/>
            <person name="Gribble S.M."/>
            <person name="Griffiths C."/>
            <person name="Hall R.E."/>
            <person name="Hammond S."/>
            <person name="Harley J.L."/>
            <person name="Hart E.A."/>
            <person name="Heath P.D."/>
            <person name="Howden P.J."/>
            <person name="Huckle E.J."/>
            <person name="Hunt P.J."/>
            <person name="Hunt A.R."/>
            <person name="Johnson C."/>
            <person name="Johnson D."/>
            <person name="Kay M."/>
            <person name="Kimberley A.M."/>
            <person name="King A."/>
            <person name="Laird G.K."/>
            <person name="Langford C.J."/>
            <person name="Lawlor S."/>
            <person name="Leongamornlert D.A."/>
            <person name="Lloyd D.M."/>
            <person name="Lloyd C."/>
            <person name="Loveland J.E."/>
            <person name="Lovell J."/>
            <person name="Martin S."/>
            <person name="Mashreghi-Mohammadi M."/>
            <person name="McLaren S.J."/>
            <person name="McMurray A."/>
            <person name="Milne S."/>
            <person name="Moore M.J.F."/>
            <person name="Nickerson T."/>
            <person name="Palmer S.A."/>
            <person name="Pearce A.V."/>
            <person name="Peck A.I."/>
            <person name="Pelan S."/>
            <person name="Phillimore B."/>
            <person name="Porter K.M."/>
            <person name="Rice C.M."/>
            <person name="Searle S."/>
            <person name="Sehra H.K."/>
            <person name="Shownkeen R."/>
            <person name="Skuce C.D."/>
            <person name="Smith M."/>
            <person name="Steward C.A."/>
            <person name="Sycamore N."/>
            <person name="Tester J."/>
            <person name="Thomas D.W."/>
            <person name="Tracey A."/>
            <person name="Tromans A."/>
            <person name="Tubby B."/>
            <person name="Wall M."/>
            <person name="Wallis J.M."/>
            <person name="West A.P."/>
            <person name="Whitehead S.L."/>
            <person name="Willey D.L."/>
            <person name="Wilming L."/>
            <person name="Wray P.W."/>
            <person name="Wright M.W."/>
            <person name="Young L."/>
            <person name="Coulson A."/>
            <person name="Durbin R.M."/>
            <person name="Hubbard T."/>
            <person name="Sulston J.E."/>
            <person name="Beck S."/>
            <person name="Bentley D.R."/>
            <person name="Rogers J."/>
            <person name="Ross M.T."/>
        </authorList>
    </citation>
    <scope>NUCLEOTIDE SEQUENCE [LARGE SCALE GENOMIC DNA]</scope>
</reference>
<reference key="4">
    <citation type="journal article" date="2000" name="Biochem. Biophys. Res. Commun.">
        <title>Establishment of the anti-Klotho monoclonal antibodies and detection of Klotho protein in kidneys.</title>
        <authorList>
            <person name="Kato Y."/>
            <person name="Arakawa E."/>
            <person name="Kinoshita S."/>
            <person name="Shirai A."/>
            <person name="Furuya A."/>
            <person name="Yamano K."/>
            <person name="Nakamura K."/>
            <person name="Iida A."/>
            <person name="Anazawa H."/>
            <person name="Koh N."/>
            <person name="Iwano A."/>
            <person name="Imura A."/>
            <person name="Fujimori T."/>
            <person name="Kuro-o M."/>
            <person name="Hanai N."/>
            <person name="Takeshige K."/>
            <person name="Nabeshima Y."/>
        </authorList>
    </citation>
    <scope>TISSUE SPECIFICITY</scope>
    <scope>SUBCELLULAR LOCATION</scope>
</reference>
<reference key="5">
    <citation type="journal article" date="2000" name="J. Mol. Med.">
        <title>Molecular cloning and expression of a novel klotho-related protein.</title>
        <authorList>
            <person name="Yahata K."/>
            <person name="Mori K."/>
            <person name="Arai H."/>
            <person name="Koide S."/>
            <person name="Ogawa Y."/>
            <person name="Mukoyama M."/>
            <person name="Sugawara A."/>
            <person name="Ozaki S."/>
            <person name="Tanaka I."/>
            <person name="Nabeshima Y."/>
            <person name="Nakao K."/>
        </authorList>
    </citation>
    <scope>TISSUE SPECIFICITY</scope>
</reference>
<reference key="6">
    <citation type="journal article" date="2001" name="Biochem. Biophys. Res. Commun.">
        <title>Severely reduced production of klotho in human chronic renal failure kidney.</title>
        <authorList>
            <person name="Koh N."/>
            <person name="Fujimori T."/>
            <person name="Nishiguchi S."/>
            <person name="Tamori A."/>
            <person name="Shiomi S."/>
            <person name="Nakatani T."/>
            <person name="Sugimura K."/>
            <person name="Kishimoto T."/>
            <person name="Kinoshita S."/>
            <person name="Kuroki T."/>
            <person name="Nabeshima Y."/>
        </authorList>
    </citation>
    <scope>TISSUE SPECIFICITY</scope>
    <scope>INVOLVEMENT IN RENAL FAILURE</scope>
</reference>
<reference key="7">
    <citation type="journal article" date="2004" name="FEBS Lett.">
        <title>Secreted Klotho protein in sera and CSF: implication for post-translational cleavage in release of Klotho protein from cell membrane.</title>
        <authorList>
            <person name="Imura A."/>
            <person name="Iwano A."/>
            <person name="Tohyama O."/>
            <person name="Tsuji Y."/>
            <person name="Nozaki K."/>
            <person name="Hashimoto N."/>
            <person name="Fujimori T."/>
            <person name="Nabeshima Y."/>
        </authorList>
    </citation>
    <scope>TISSUE SPECIFICITY</scope>
    <scope>SUBCELLULAR LOCATION</scope>
</reference>
<reference key="8">
    <citation type="journal article" date="2002" name="Proc. Natl. Acad. Sci. U.S.A.">
        <title>Association of human aging with a functional variant of klotho.</title>
        <authorList>
            <person name="Arking D.E."/>
            <person name="Krebsova A."/>
            <person name="Macek M. Sr."/>
            <person name="Macek M. Jr."/>
            <person name="Arking A."/>
            <person name="Mian I.S."/>
            <person name="Fried L."/>
            <person name="Hamosh A."/>
            <person name="Dey S."/>
            <person name="McIntosh I."/>
            <person name="Dietz H.C."/>
        </authorList>
    </citation>
    <scope>VARIANTS KL-VS VAL-352 AND SER-370</scope>
</reference>
<reference key="9">
    <citation type="journal article" date="2005" name="Circ. Res.">
        <title>Association between a functional variant of the KLOTHO gene and high-density lipoprotein cholesterol, blood pressure, stroke, and longevity.</title>
        <authorList>
            <person name="Arking D.E."/>
            <person name="Atzmon G."/>
            <person name="Arking A."/>
            <person name="Barzilai N."/>
            <person name="Dietz H.C."/>
        </authorList>
    </citation>
    <scope>VARIANTS KL-VS VAL-352 AND SER-370</scope>
</reference>
<reference key="10">
    <citation type="journal article" date="2006" name="Science">
        <title>The consensus coding sequences of human breast and colorectal cancers.</title>
        <authorList>
            <person name="Sjoeblom T."/>
            <person name="Jones S."/>
            <person name="Wood L.D."/>
            <person name="Parsons D.W."/>
            <person name="Lin J."/>
            <person name="Barber T.D."/>
            <person name="Mandelker D."/>
            <person name="Leary R.J."/>
            <person name="Ptak J."/>
            <person name="Silliman N."/>
            <person name="Szabo S."/>
            <person name="Buckhaults P."/>
            <person name="Farrell C."/>
            <person name="Meeh P."/>
            <person name="Markowitz S.D."/>
            <person name="Willis J."/>
            <person name="Dawson D."/>
            <person name="Willson J.K.V."/>
            <person name="Gazdar A.F."/>
            <person name="Hartigan J."/>
            <person name="Wu L."/>
            <person name="Liu C."/>
            <person name="Parmigiani G."/>
            <person name="Park B.H."/>
            <person name="Bachman K.E."/>
            <person name="Papadopoulos N."/>
            <person name="Vogelstein B."/>
            <person name="Kinzler K.W."/>
            <person name="Velculescu V.E."/>
        </authorList>
    </citation>
    <scope>VARIANT [LARGE SCALE ANALYSIS] LEU-954</scope>
</reference>
<reference key="11">
    <citation type="journal article" date="2007" name="J. Clin. Invest.">
        <title>A homozygous missense mutation in human KLOTHO causes severe tumoral calcinosis.</title>
        <authorList>
            <person name="Ichikawa S."/>
            <person name="Imel E.A."/>
            <person name="Kreiter M.L."/>
            <person name="Yu X."/>
            <person name="Mackenzie D.S."/>
            <person name="Sorenson A.H."/>
            <person name="Goetz R."/>
            <person name="Mohammadi M."/>
            <person name="White K.E."/>
            <person name="Econs M.J."/>
        </authorList>
    </citation>
    <scope>VARIANT HFTC3 ARG-193</scope>
</reference>
<comment type="function">
    <text evidence="1">May have weak glycosidase activity towards glucuronylated steroids. However, it lacks essential active site Glu residues at positions 239 and 872, suggesting it may be inactive as a glycosidase in vivo. May be involved in the regulation of calcium and phosphorus homeostasis by inhibiting the synthesis of active vitamin D (By similarity). Essential factor for the specific interaction between FGF23 and FGFR1 (By similarity).</text>
</comment>
<comment type="function">
    <text evidence="1">The Klotho peptide generated by cleavage of the membrane-bound isoform may be an anti-aging circulating hormone which would extend life span by inhibiting insulin/IGF1 signaling.</text>
</comment>
<comment type="catalytic activity">
    <reaction>
        <text>a beta-D-glucuronoside + H2O = D-glucuronate + an alcohol</text>
        <dbReference type="Rhea" id="RHEA:17633"/>
        <dbReference type="ChEBI" id="CHEBI:15377"/>
        <dbReference type="ChEBI" id="CHEBI:30879"/>
        <dbReference type="ChEBI" id="CHEBI:58720"/>
        <dbReference type="ChEBI" id="CHEBI:83411"/>
        <dbReference type="EC" id="3.2.1.31"/>
    </reaction>
</comment>
<comment type="subunit">
    <text evidence="1">Homodimer. Interacts with FGF23 and FGFR1.</text>
</comment>
<comment type="subcellular location">
    <molecule>Isoform 1</molecule>
    <subcellularLocation>
        <location evidence="4 8">Cell membrane</location>
        <topology evidence="15">Single-pass type I membrane protein</topology>
    </subcellularLocation>
    <subcellularLocation>
        <location evidence="2">Apical cell membrane</location>
        <topology evidence="2">Single-pass type I membrane protein</topology>
    </subcellularLocation>
    <text evidence="2">Isoform 1 shedding leads to a soluble peptide.</text>
</comment>
<comment type="subcellular location">
    <molecule>Isoform 2</molecule>
    <subcellularLocation>
        <location evidence="4 8">Secreted</location>
    </subcellularLocation>
</comment>
<comment type="subcellular location">
    <molecule>Klotho peptide</molecule>
    <subcellularLocation>
        <location evidence="2">Secreted</location>
    </subcellularLocation>
</comment>
<comment type="alternative products">
    <event type="alternative splicing"/>
    <isoform>
        <id>Q9UEF7-1</id>
        <name>1</name>
        <name>Membrane-bound</name>
        <sequence type="displayed"/>
    </isoform>
    <isoform>
        <id>Q9UEF7-2</id>
        <name>2</name>
        <name>Secreted</name>
        <sequence type="described" ref="VSP_015824 VSP_015825"/>
    </isoform>
</comment>
<comment type="tissue specificity">
    <text evidence="4 5 6 8 13">Present in cortical renal tubules (at protein level). Soluble peptide is present in serum and cerebrospinal fluid. Expressed in kidney, placenta, small intestine and prostate. Down-regulated in renal cell carcinomas, hepatocellular carcinomas, and in chronic renal failure kidney.</text>
</comment>
<comment type="domain">
    <text>Contains 2 glycosyl hydrolase 1 regions. However, the first region lacks the essential Glu active site residue at position 239, and the second one lacks the essential Glu active site residue at position 872.</text>
</comment>
<comment type="PTM">
    <text evidence="1">N-glycosylated.</text>
</comment>
<comment type="polymorphism">
    <text evidence="7 9">Homozygosity for KL-VS allele is associated with decreased longevity and increased cardiovascular disease risk.</text>
</comment>
<comment type="disease" evidence="11">
    <disease id="DI-05254">
        <name>Tumoral calcinosis, hyperphosphatemic, familial, 3</name>
        <acronym>HFTC3</acronym>
        <description>A form of hyperphosphatemic tumoral calcinosis, a rare autosomal recessive metabolic disorder that manifests with hyperphosphatemia and massive calcium deposits in the skin and subcutaneous tissues. Some patients have recurrent, transient, painful swellings of the long bones associated with the radiographic findings of periosteal reaction and cortical hyperostosis and absence of skin involvement.</description>
        <dbReference type="MIM" id="617994"/>
    </disease>
    <text>The disease is caused by variants affecting the gene represented in this entry.</text>
</comment>
<comment type="miscellaneous">
    <text>Defects in KL may be a cause of chronic renal failure complications.</text>
</comment>
<comment type="miscellaneous">
    <molecule>Isoform 2</molecule>
    <text evidence="15">Predominates over the membrane form in all tissues examined.</text>
</comment>
<comment type="similarity">
    <text evidence="15">Belongs to the glycosyl hydrolase 1 family. Klotho subfamily.</text>
</comment>
<comment type="online information" name="Protein Spotlight">
    <link uri="https://www.proteinspotlight.org/back_issues/065"/>
    <text>The thread of life - Issue 65 of December 2005</text>
</comment>
<gene>
    <name type="primary">KL</name>
</gene>